<accession>O26223</accession>
<comment type="cofactor">
    <cofactor evidence="2">
        <name>FMN</name>
        <dbReference type="ChEBI" id="CHEBI:58210"/>
    </cofactor>
</comment>
<comment type="similarity">
    <text evidence="2">Belongs to the nitroreductase family.</text>
</comment>
<sequence>MKLLWTSQHIKVTVHIDGKVSKMDVLEAIKTRRSIRKYQDREVPEELIDKILDAAMCGPSAVDERPWHFIVVRNREMLEKIPEVHPYGAMVKDAPVAIIVCCDSSLEKIPGFWVQDCSIASQNILLAAHSLGLGAVWTGVYPLEDRVEGIRRLFSIPEHVIPFSVIPLGYPAENPGTRDLFDPDRIHLEKW</sequence>
<evidence type="ECO:0000250" key="1"/>
<evidence type="ECO:0000305" key="2"/>
<feature type="chain" id="PRO_0000072725" description="Putative NADH dehydrogenase/NAD(P)H nitroreductase">
    <location>
        <begin position="1"/>
        <end position="191"/>
    </location>
</feature>
<feature type="binding site" evidence="1">
    <location>
        <begin position="127"/>
        <end position="132"/>
    </location>
    <ligand>
        <name>NAD(+)</name>
        <dbReference type="ChEBI" id="CHEBI:57540"/>
    </ligand>
</feature>
<reference key="1">
    <citation type="journal article" date="1997" name="J. Bacteriol.">
        <title>Complete genome sequence of Methanobacterium thermoautotrophicum deltaH: functional analysis and comparative genomics.</title>
        <authorList>
            <person name="Smith D.R."/>
            <person name="Doucette-Stamm L.A."/>
            <person name="Deloughery C."/>
            <person name="Lee H.-M."/>
            <person name="Dubois J."/>
            <person name="Aldredge T."/>
            <person name="Bashirzadeh R."/>
            <person name="Blakely D."/>
            <person name="Cook R."/>
            <person name="Gilbert K."/>
            <person name="Harrison D."/>
            <person name="Hoang L."/>
            <person name="Keagle P."/>
            <person name="Lumm W."/>
            <person name="Pothier B."/>
            <person name="Qiu D."/>
            <person name="Spadafora R."/>
            <person name="Vicare R."/>
            <person name="Wang Y."/>
            <person name="Wierzbowski J."/>
            <person name="Gibson R."/>
            <person name="Jiwani N."/>
            <person name="Caruso A."/>
            <person name="Bush D."/>
            <person name="Safer H."/>
            <person name="Patwell D."/>
            <person name="Prabhakar S."/>
            <person name="McDougall S."/>
            <person name="Shimer G."/>
            <person name="Goyal A."/>
            <person name="Pietrovski S."/>
            <person name="Church G.M."/>
            <person name="Daniels C.J."/>
            <person name="Mao J.-I."/>
            <person name="Rice P."/>
            <person name="Noelling J."/>
            <person name="Reeve J.N."/>
        </authorList>
    </citation>
    <scope>NUCLEOTIDE SEQUENCE [LARGE SCALE GENOMIC DNA]</scope>
    <source>
        <strain>ATCC 29096 / DSM 1053 / JCM 10044 / NBRC 100330 / Delta H</strain>
    </source>
</reference>
<name>Y120_METTH</name>
<dbReference type="EC" id="1.-.-.-"/>
<dbReference type="EMBL" id="AE000666">
    <property type="protein sequence ID" value="AAB84626.1"/>
    <property type="molecule type" value="Genomic_DNA"/>
</dbReference>
<dbReference type="PIR" id="B69027">
    <property type="entry name" value="B69027"/>
</dbReference>
<dbReference type="SMR" id="O26223"/>
<dbReference type="STRING" id="187420.MTH_120"/>
<dbReference type="PaxDb" id="187420-MTH_120"/>
<dbReference type="EnsemblBacteria" id="AAB84626">
    <property type="protein sequence ID" value="AAB84626"/>
    <property type="gene ID" value="MTH_120"/>
</dbReference>
<dbReference type="KEGG" id="mth:MTH_120"/>
<dbReference type="PATRIC" id="fig|187420.15.peg.93"/>
<dbReference type="HOGENOM" id="CLU_070764_7_3_2"/>
<dbReference type="InParanoid" id="O26223"/>
<dbReference type="Proteomes" id="UP000005223">
    <property type="component" value="Chromosome"/>
</dbReference>
<dbReference type="GO" id="GO:0016491">
    <property type="term" value="F:oxidoreductase activity"/>
    <property type="evidence" value="ECO:0007669"/>
    <property type="project" value="UniProtKB-KW"/>
</dbReference>
<dbReference type="CDD" id="cd02150">
    <property type="entry name" value="nitroreductase"/>
    <property type="match status" value="1"/>
</dbReference>
<dbReference type="Gene3D" id="3.40.109.10">
    <property type="entry name" value="NADH Oxidase"/>
    <property type="match status" value="1"/>
</dbReference>
<dbReference type="InterPro" id="IPR029479">
    <property type="entry name" value="Nitroreductase"/>
</dbReference>
<dbReference type="InterPro" id="IPR000415">
    <property type="entry name" value="Nitroreductase-like"/>
</dbReference>
<dbReference type="InterPro" id="IPR050627">
    <property type="entry name" value="Nitroreductase/BluB"/>
</dbReference>
<dbReference type="PANTHER" id="PTHR23026:SF90">
    <property type="entry name" value="IODOTYROSINE DEIODINASE 1"/>
    <property type="match status" value="1"/>
</dbReference>
<dbReference type="PANTHER" id="PTHR23026">
    <property type="entry name" value="NADPH NITROREDUCTASE"/>
    <property type="match status" value="1"/>
</dbReference>
<dbReference type="Pfam" id="PF00881">
    <property type="entry name" value="Nitroreductase"/>
    <property type="match status" value="2"/>
</dbReference>
<dbReference type="SUPFAM" id="SSF55469">
    <property type="entry name" value="FMN-dependent nitroreductase-like"/>
    <property type="match status" value="1"/>
</dbReference>
<protein>
    <recommendedName>
        <fullName>Putative NADH dehydrogenase/NAD(P)H nitroreductase</fullName>
        <ecNumber>1.-.-.-</ecNumber>
    </recommendedName>
</protein>
<organism>
    <name type="scientific">Methanothermobacter thermautotrophicus (strain ATCC 29096 / DSM 1053 / JCM 10044 / NBRC 100330 / Delta H)</name>
    <name type="common">Methanobacterium thermoautotrophicum</name>
    <dbReference type="NCBI Taxonomy" id="187420"/>
    <lineage>
        <taxon>Archaea</taxon>
        <taxon>Methanobacteriati</taxon>
        <taxon>Methanobacteriota</taxon>
        <taxon>Methanomada group</taxon>
        <taxon>Methanobacteria</taxon>
        <taxon>Methanobacteriales</taxon>
        <taxon>Methanobacteriaceae</taxon>
        <taxon>Methanothermobacter</taxon>
    </lineage>
</organism>
<gene>
    <name type="ordered locus">MTH_120</name>
</gene>
<proteinExistence type="inferred from homology"/>
<keyword id="KW-0285">Flavoprotein</keyword>
<keyword id="KW-0288">FMN</keyword>
<keyword id="KW-0520">NAD</keyword>
<keyword id="KW-0521">NADP</keyword>
<keyword id="KW-0560">Oxidoreductase</keyword>
<keyword id="KW-1185">Reference proteome</keyword>